<proteinExistence type="evidence at protein level"/>
<name>Y480_MYCTU</name>
<reference key="1">
    <citation type="journal article" date="1998" name="Nature">
        <title>Deciphering the biology of Mycobacterium tuberculosis from the complete genome sequence.</title>
        <authorList>
            <person name="Cole S.T."/>
            <person name="Brosch R."/>
            <person name="Parkhill J."/>
            <person name="Garnier T."/>
            <person name="Churcher C.M."/>
            <person name="Harris D.E."/>
            <person name="Gordon S.V."/>
            <person name="Eiglmeier K."/>
            <person name="Gas S."/>
            <person name="Barry C.E. III"/>
            <person name="Tekaia F."/>
            <person name="Badcock K."/>
            <person name="Basham D."/>
            <person name="Brown D."/>
            <person name="Chillingworth T."/>
            <person name="Connor R."/>
            <person name="Davies R.M."/>
            <person name="Devlin K."/>
            <person name="Feltwell T."/>
            <person name="Gentles S."/>
            <person name="Hamlin N."/>
            <person name="Holroyd S."/>
            <person name="Hornsby T."/>
            <person name="Jagels K."/>
            <person name="Krogh A."/>
            <person name="McLean J."/>
            <person name="Moule S."/>
            <person name="Murphy L.D."/>
            <person name="Oliver S."/>
            <person name="Osborne J."/>
            <person name="Quail M.A."/>
            <person name="Rajandream M.A."/>
            <person name="Rogers J."/>
            <person name="Rutter S."/>
            <person name="Seeger K."/>
            <person name="Skelton S."/>
            <person name="Squares S."/>
            <person name="Squares R."/>
            <person name="Sulston J.E."/>
            <person name="Taylor K."/>
            <person name="Whitehead S."/>
            <person name="Barrell B.G."/>
        </authorList>
    </citation>
    <scope>NUCLEOTIDE SEQUENCE [LARGE SCALE GENOMIC DNA]</scope>
    <source>
        <strain>ATCC 25618 / H37Rv</strain>
    </source>
</reference>
<reference key="2">
    <citation type="journal article" date="2011" name="Mol. Cell. Proteomics">
        <title>Proteogenomic analysis of Mycobacterium tuberculosis by high resolution mass spectrometry.</title>
        <authorList>
            <person name="Kelkar D.S."/>
            <person name="Kumar D."/>
            <person name="Kumar P."/>
            <person name="Balakrishnan L."/>
            <person name="Muthusamy B."/>
            <person name="Yadav A.K."/>
            <person name="Shrivastava P."/>
            <person name="Marimuthu A."/>
            <person name="Anand S."/>
            <person name="Sundaram H."/>
            <person name="Kingsbury R."/>
            <person name="Harsha H.C."/>
            <person name="Nair B."/>
            <person name="Prasad T.S."/>
            <person name="Chauhan D.S."/>
            <person name="Katoch K."/>
            <person name="Katoch V.M."/>
            <person name="Kumar P."/>
            <person name="Chaerkady R."/>
            <person name="Ramachandran S."/>
            <person name="Dash D."/>
            <person name="Pandey A."/>
        </authorList>
    </citation>
    <scope>IDENTIFICATION BY MASS SPECTROMETRY [LARGE SCALE ANALYSIS]</scope>
    <source>
        <strain>ATCC 25618 / H37Rv</strain>
    </source>
</reference>
<protein>
    <recommendedName>
        <fullName>Hydrolase Rv0480c</fullName>
        <ecNumber>3.5.-.-</ecNumber>
    </recommendedName>
</protein>
<keyword id="KW-0378">Hydrolase</keyword>
<keyword id="KW-1185">Reference proteome</keyword>
<gene>
    <name type="ordered locus">Rv0480c</name>
    <name type="ORF">MTCY20G9.06c</name>
</gene>
<sequence>MRIALAQIRSGTDPAANLQLVGKYAGEAATAGAQLVVFPEATMCRLGVPLRQVAEPVDGPWANGVRRIATEAGITVIAGMFTPTGDGRVTNTLIAAGPGTPNQPDAHYHKIHLYDAFGFTESRTVAPGREPVVVVVDGVRVGLTVCYDIRFPALYTELARRGAQLIAVCASWGSGPGKLEQWTLLARARALDSMSYVAAAGQADPGDARTGVGASSAAPTGVGGSLVASPLGEVVVSAGTQPQLLVADIDVDNVAAARDRIAVLRNQTDFVQIDKAQSRG</sequence>
<feature type="chain" id="PRO_0000213261" description="Hydrolase Rv0480c">
    <location>
        <begin position="1"/>
        <end position="280"/>
    </location>
</feature>
<feature type="domain" description="CN hydrolase" evidence="1">
    <location>
        <begin position="1"/>
        <end position="251"/>
    </location>
</feature>
<feature type="active site" description="Proton acceptor" evidence="1">
    <location>
        <position position="40"/>
    </location>
</feature>
<feature type="active site" description="Proton donor" evidence="1">
    <location>
        <position position="110"/>
    </location>
</feature>
<feature type="active site" description="Nucleophile" evidence="1">
    <location>
        <position position="146"/>
    </location>
</feature>
<dbReference type="EC" id="3.5.-.-"/>
<dbReference type="EMBL" id="AL123456">
    <property type="protein sequence ID" value="CCP43214.1"/>
    <property type="molecule type" value="Genomic_DNA"/>
</dbReference>
<dbReference type="PIR" id="C70743">
    <property type="entry name" value="C70743"/>
</dbReference>
<dbReference type="RefSeq" id="NP_214994.2">
    <property type="nucleotide sequence ID" value="NC_000962.3"/>
</dbReference>
<dbReference type="RefSeq" id="WP_003402350.1">
    <property type="nucleotide sequence ID" value="NZ_KK339370.1"/>
</dbReference>
<dbReference type="SMR" id="P9WJ01"/>
<dbReference type="FunCoup" id="P9WJ01">
    <property type="interactions" value="409"/>
</dbReference>
<dbReference type="STRING" id="83332.Rv0480c"/>
<dbReference type="PaxDb" id="83332-Rv0480c"/>
<dbReference type="GeneID" id="887163"/>
<dbReference type="KEGG" id="mtu:Rv0480c"/>
<dbReference type="KEGG" id="mtv:RVBD_0480c"/>
<dbReference type="TubercuList" id="Rv0480c"/>
<dbReference type="eggNOG" id="COG0388">
    <property type="taxonomic scope" value="Bacteria"/>
</dbReference>
<dbReference type="InParanoid" id="P9WJ01"/>
<dbReference type="OrthoDB" id="9811121at2"/>
<dbReference type="PhylomeDB" id="P9WJ01"/>
<dbReference type="Proteomes" id="UP000001584">
    <property type="component" value="Chromosome"/>
</dbReference>
<dbReference type="GO" id="GO:0009274">
    <property type="term" value="C:peptidoglycan-based cell wall"/>
    <property type="evidence" value="ECO:0007005"/>
    <property type="project" value="MTBBASE"/>
</dbReference>
<dbReference type="GO" id="GO:0016787">
    <property type="term" value="F:hydrolase activity"/>
    <property type="evidence" value="ECO:0007669"/>
    <property type="project" value="UniProtKB-KW"/>
</dbReference>
<dbReference type="CDD" id="cd07581">
    <property type="entry name" value="nitrilase_3"/>
    <property type="match status" value="1"/>
</dbReference>
<dbReference type="FunFam" id="3.60.110.10:FF:000030">
    <property type="entry name" value="Carbon-nitrogen hydrolase"/>
    <property type="match status" value="1"/>
</dbReference>
<dbReference type="Gene3D" id="3.60.110.10">
    <property type="entry name" value="Carbon-nitrogen hydrolase"/>
    <property type="match status" value="1"/>
</dbReference>
<dbReference type="InterPro" id="IPR003010">
    <property type="entry name" value="C-N_Hydrolase"/>
</dbReference>
<dbReference type="InterPro" id="IPR036526">
    <property type="entry name" value="C-N_Hydrolase_sf"/>
</dbReference>
<dbReference type="InterPro" id="IPR001110">
    <property type="entry name" value="UPF0012_CS"/>
</dbReference>
<dbReference type="PANTHER" id="PTHR23088:SF27">
    <property type="entry name" value="DEAMINATED GLUTATHIONE AMIDASE"/>
    <property type="match status" value="1"/>
</dbReference>
<dbReference type="PANTHER" id="PTHR23088">
    <property type="entry name" value="NITRILASE-RELATED"/>
    <property type="match status" value="1"/>
</dbReference>
<dbReference type="Pfam" id="PF00795">
    <property type="entry name" value="CN_hydrolase"/>
    <property type="match status" value="1"/>
</dbReference>
<dbReference type="SUPFAM" id="SSF56317">
    <property type="entry name" value="Carbon-nitrogen hydrolase"/>
    <property type="match status" value="1"/>
</dbReference>
<dbReference type="PROSITE" id="PS50263">
    <property type="entry name" value="CN_HYDROLASE"/>
    <property type="match status" value="1"/>
</dbReference>
<dbReference type="PROSITE" id="PS01227">
    <property type="entry name" value="UPF0012"/>
    <property type="match status" value="1"/>
</dbReference>
<evidence type="ECO:0000255" key="1">
    <source>
        <dbReference type="PROSITE-ProRule" id="PRU00054"/>
    </source>
</evidence>
<evidence type="ECO:0000305" key="2"/>
<organism>
    <name type="scientific">Mycobacterium tuberculosis (strain ATCC 25618 / H37Rv)</name>
    <dbReference type="NCBI Taxonomy" id="83332"/>
    <lineage>
        <taxon>Bacteria</taxon>
        <taxon>Bacillati</taxon>
        <taxon>Actinomycetota</taxon>
        <taxon>Actinomycetes</taxon>
        <taxon>Mycobacteriales</taxon>
        <taxon>Mycobacteriaceae</taxon>
        <taxon>Mycobacterium</taxon>
        <taxon>Mycobacterium tuberculosis complex</taxon>
    </lineage>
</organism>
<comment type="similarity">
    <text evidence="2">Belongs to the carbon-nitrogen hydrolase superfamily. NIT1/NIT2 family.</text>
</comment>
<accession>P9WJ01</accession>
<accession>L0T5H5</accession>
<accession>Q11146</accession>